<reference key="1">
    <citation type="journal article" date="1998" name="EMBO J.">
        <title>Drosophila CtBP: a Hairy-interacting protein required for embryonic segmentation and hairy-mediated transcriptional repression.</title>
        <authorList>
            <person name="Poortinga G."/>
            <person name="Watanabe M."/>
            <person name="Parkhurst S.M."/>
        </authorList>
    </citation>
    <scope>NUCLEOTIDE SEQUENCE [MRNA] (ISOFORM A)</scope>
    <scope>FUNCTION</scope>
    <scope>INTERACTION WITH H AND HLHM-DELTA</scope>
    <scope>DEVELOPMENTAL STAGE</scope>
    <scope>ALTERNATIVE SPLICING</scope>
    <source>
        <tissue>Embryo</tissue>
    </source>
</reference>
<reference key="2">
    <citation type="journal article" date="1998" name="Science">
        <title>Interaction of short-range repressors with Drosophila CtBP in the embryo.</title>
        <authorList>
            <person name="Nibu Y."/>
            <person name="Zhang H."/>
            <person name="Levine M."/>
        </authorList>
    </citation>
    <scope>NUCLEOTIDE SEQUENCE [MRNA] (ISOFORM A)</scope>
    <scope>FUNCTION</scope>
</reference>
<reference key="3">
    <citation type="journal article" date="2000" name="Science">
        <title>The genome sequence of Drosophila melanogaster.</title>
        <authorList>
            <person name="Adams M.D."/>
            <person name="Celniker S.E."/>
            <person name="Holt R.A."/>
            <person name="Evans C.A."/>
            <person name="Gocayne J.D."/>
            <person name="Amanatides P.G."/>
            <person name="Scherer S.E."/>
            <person name="Li P.W."/>
            <person name="Hoskins R.A."/>
            <person name="Galle R.F."/>
            <person name="George R.A."/>
            <person name="Lewis S.E."/>
            <person name="Richards S."/>
            <person name="Ashburner M."/>
            <person name="Henderson S.N."/>
            <person name="Sutton G.G."/>
            <person name="Wortman J.R."/>
            <person name="Yandell M.D."/>
            <person name="Zhang Q."/>
            <person name="Chen L.X."/>
            <person name="Brandon R.C."/>
            <person name="Rogers Y.-H.C."/>
            <person name="Blazej R.G."/>
            <person name="Champe M."/>
            <person name="Pfeiffer B.D."/>
            <person name="Wan K.H."/>
            <person name="Doyle C."/>
            <person name="Baxter E.G."/>
            <person name="Helt G."/>
            <person name="Nelson C.R."/>
            <person name="Miklos G.L.G."/>
            <person name="Abril J.F."/>
            <person name="Agbayani A."/>
            <person name="An H.-J."/>
            <person name="Andrews-Pfannkoch C."/>
            <person name="Baldwin D."/>
            <person name="Ballew R.M."/>
            <person name="Basu A."/>
            <person name="Baxendale J."/>
            <person name="Bayraktaroglu L."/>
            <person name="Beasley E.M."/>
            <person name="Beeson K.Y."/>
            <person name="Benos P.V."/>
            <person name="Berman B.P."/>
            <person name="Bhandari D."/>
            <person name="Bolshakov S."/>
            <person name="Borkova D."/>
            <person name="Botchan M.R."/>
            <person name="Bouck J."/>
            <person name="Brokstein P."/>
            <person name="Brottier P."/>
            <person name="Burtis K.C."/>
            <person name="Busam D.A."/>
            <person name="Butler H."/>
            <person name="Cadieu E."/>
            <person name="Center A."/>
            <person name="Chandra I."/>
            <person name="Cherry J.M."/>
            <person name="Cawley S."/>
            <person name="Dahlke C."/>
            <person name="Davenport L.B."/>
            <person name="Davies P."/>
            <person name="de Pablos B."/>
            <person name="Delcher A."/>
            <person name="Deng Z."/>
            <person name="Mays A.D."/>
            <person name="Dew I."/>
            <person name="Dietz S.M."/>
            <person name="Dodson K."/>
            <person name="Doup L.E."/>
            <person name="Downes M."/>
            <person name="Dugan-Rocha S."/>
            <person name="Dunkov B.C."/>
            <person name="Dunn P."/>
            <person name="Durbin K.J."/>
            <person name="Evangelista C.C."/>
            <person name="Ferraz C."/>
            <person name="Ferriera S."/>
            <person name="Fleischmann W."/>
            <person name="Fosler C."/>
            <person name="Gabrielian A.E."/>
            <person name="Garg N.S."/>
            <person name="Gelbart W.M."/>
            <person name="Glasser K."/>
            <person name="Glodek A."/>
            <person name="Gong F."/>
            <person name="Gorrell J.H."/>
            <person name="Gu Z."/>
            <person name="Guan P."/>
            <person name="Harris M."/>
            <person name="Harris N.L."/>
            <person name="Harvey D.A."/>
            <person name="Heiman T.J."/>
            <person name="Hernandez J.R."/>
            <person name="Houck J."/>
            <person name="Hostin D."/>
            <person name="Houston K.A."/>
            <person name="Howland T.J."/>
            <person name="Wei M.-H."/>
            <person name="Ibegwam C."/>
            <person name="Jalali M."/>
            <person name="Kalush F."/>
            <person name="Karpen G.H."/>
            <person name="Ke Z."/>
            <person name="Kennison J.A."/>
            <person name="Ketchum K.A."/>
            <person name="Kimmel B.E."/>
            <person name="Kodira C.D."/>
            <person name="Kraft C.L."/>
            <person name="Kravitz S."/>
            <person name="Kulp D."/>
            <person name="Lai Z."/>
            <person name="Lasko P."/>
            <person name="Lei Y."/>
            <person name="Levitsky A.A."/>
            <person name="Li J.H."/>
            <person name="Li Z."/>
            <person name="Liang Y."/>
            <person name="Lin X."/>
            <person name="Liu X."/>
            <person name="Mattei B."/>
            <person name="McIntosh T.C."/>
            <person name="McLeod M.P."/>
            <person name="McPherson D."/>
            <person name="Merkulov G."/>
            <person name="Milshina N.V."/>
            <person name="Mobarry C."/>
            <person name="Morris J."/>
            <person name="Moshrefi A."/>
            <person name="Mount S.M."/>
            <person name="Moy M."/>
            <person name="Murphy B."/>
            <person name="Murphy L."/>
            <person name="Muzny D.M."/>
            <person name="Nelson D.L."/>
            <person name="Nelson D.R."/>
            <person name="Nelson K.A."/>
            <person name="Nixon K."/>
            <person name="Nusskern D.R."/>
            <person name="Pacleb J.M."/>
            <person name="Palazzolo M."/>
            <person name="Pittman G.S."/>
            <person name="Pan S."/>
            <person name="Pollard J."/>
            <person name="Puri V."/>
            <person name="Reese M.G."/>
            <person name="Reinert K."/>
            <person name="Remington K."/>
            <person name="Saunders R.D.C."/>
            <person name="Scheeler F."/>
            <person name="Shen H."/>
            <person name="Shue B.C."/>
            <person name="Siden-Kiamos I."/>
            <person name="Simpson M."/>
            <person name="Skupski M.P."/>
            <person name="Smith T.J."/>
            <person name="Spier E."/>
            <person name="Spradling A.C."/>
            <person name="Stapleton M."/>
            <person name="Strong R."/>
            <person name="Sun E."/>
            <person name="Svirskas R."/>
            <person name="Tector C."/>
            <person name="Turner R."/>
            <person name="Venter E."/>
            <person name="Wang A.H."/>
            <person name="Wang X."/>
            <person name="Wang Z.-Y."/>
            <person name="Wassarman D.A."/>
            <person name="Weinstock G.M."/>
            <person name="Weissenbach J."/>
            <person name="Williams S.M."/>
            <person name="Woodage T."/>
            <person name="Worley K.C."/>
            <person name="Wu D."/>
            <person name="Yang S."/>
            <person name="Yao Q.A."/>
            <person name="Ye J."/>
            <person name="Yeh R.-F."/>
            <person name="Zaveri J.S."/>
            <person name="Zhan M."/>
            <person name="Zhang G."/>
            <person name="Zhao Q."/>
            <person name="Zheng L."/>
            <person name="Zheng X.H."/>
            <person name="Zhong F.N."/>
            <person name="Zhong W."/>
            <person name="Zhou X."/>
            <person name="Zhu S.C."/>
            <person name="Zhu X."/>
            <person name="Smith H.O."/>
            <person name="Gibbs R.A."/>
            <person name="Myers E.W."/>
            <person name="Rubin G.M."/>
            <person name="Venter J.C."/>
        </authorList>
    </citation>
    <scope>NUCLEOTIDE SEQUENCE [LARGE SCALE GENOMIC DNA]</scope>
    <source>
        <strain>Berkeley</strain>
    </source>
</reference>
<reference key="4">
    <citation type="journal article" date="2002" name="Genome Biol.">
        <title>Annotation of the Drosophila melanogaster euchromatic genome: a systematic review.</title>
        <authorList>
            <person name="Misra S."/>
            <person name="Crosby M.A."/>
            <person name="Mungall C.J."/>
            <person name="Matthews B.B."/>
            <person name="Campbell K.S."/>
            <person name="Hradecky P."/>
            <person name="Huang Y."/>
            <person name="Kaminker J.S."/>
            <person name="Millburn G.H."/>
            <person name="Prochnik S.E."/>
            <person name="Smith C.D."/>
            <person name="Tupy J.L."/>
            <person name="Whitfield E.J."/>
            <person name="Bayraktaroglu L."/>
            <person name="Berman B.P."/>
            <person name="Bettencourt B.R."/>
            <person name="Celniker S.E."/>
            <person name="de Grey A.D.N.J."/>
            <person name="Drysdale R.A."/>
            <person name="Harris N.L."/>
            <person name="Richter J."/>
            <person name="Russo S."/>
            <person name="Schroeder A.J."/>
            <person name="Shu S.Q."/>
            <person name="Stapleton M."/>
            <person name="Yamada C."/>
            <person name="Ashburner M."/>
            <person name="Gelbart W.M."/>
            <person name="Rubin G.M."/>
            <person name="Lewis S.E."/>
        </authorList>
    </citation>
    <scope>GENOME REANNOTATION</scope>
    <source>
        <strain>Berkeley</strain>
    </source>
</reference>
<reference key="5">
    <citation type="journal article" date="2002" name="Genome Biol.">
        <title>A Drosophila full-length cDNA resource.</title>
        <authorList>
            <person name="Stapleton M."/>
            <person name="Carlson J.W."/>
            <person name="Brokstein P."/>
            <person name="Yu C."/>
            <person name="Champe M."/>
            <person name="George R.A."/>
            <person name="Guarin H."/>
            <person name="Kronmiller B."/>
            <person name="Pacleb J.M."/>
            <person name="Park S."/>
            <person name="Wan K.H."/>
            <person name="Rubin G.M."/>
            <person name="Celniker S.E."/>
        </authorList>
    </citation>
    <scope>NUCLEOTIDE SEQUENCE [LARGE SCALE MRNA] (ISOFORM A)</scope>
    <scope>NUCLEOTIDE SEQUENCE [LARGE SCALE MRNA] OF 319-476 (ISOFORM E)</scope>
    <source>
        <strain>Berkeley</strain>
        <tissue>Head</tissue>
    </source>
</reference>
<reference key="6">
    <citation type="submission" date="2003-12" db="EMBL/GenBank/DDBJ databases">
        <authorList>
            <person name="Stapleton M."/>
            <person name="Brokstein P."/>
            <person name="Hong L."/>
            <person name="Agbayani A."/>
            <person name="Carlson J.W."/>
            <person name="Champe M."/>
            <person name="Chavez C."/>
            <person name="Dorsett V."/>
            <person name="Dresnek D."/>
            <person name="Farfan D."/>
            <person name="Frise E."/>
            <person name="George R.A."/>
            <person name="Gonzalez M."/>
            <person name="Guarin H."/>
            <person name="Kronmiller B."/>
            <person name="Li P.W."/>
            <person name="Liao G."/>
            <person name="Miranda A."/>
            <person name="Mungall C.J."/>
            <person name="Nunoo J."/>
            <person name="Pacleb J.M."/>
            <person name="Paragas V."/>
            <person name="Park S."/>
            <person name="Patel S."/>
            <person name="Phouanenavong S."/>
            <person name="Wan K.H."/>
            <person name="Yu C."/>
            <person name="Lewis S.E."/>
            <person name="Rubin G.M."/>
            <person name="Celniker S.E."/>
        </authorList>
    </citation>
    <scope>SEQUENCE REVISION</scope>
</reference>
<dbReference type="EMBL" id="AJ224690">
    <property type="protein sequence ID" value="CAA12074.1"/>
    <property type="molecule type" value="mRNA"/>
</dbReference>
<dbReference type="EMBL" id="AB011840">
    <property type="protein sequence ID" value="BAA25287.1"/>
    <property type="molecule type" value="mRNA"/>
</dbReference>
<dbReference type="EMBL" id="AE014297">
    <property type="protein sequence ID" value="AAF54891.1"/>
    <property type="molecule type" value="Genomic_DNA"/>
</dbReference>
<dbReference type="EMBL" id="AE014297">
    <property type="protein sequence ID" value="AAX52947.1"/>
    <property type="molecule type" value="Genomic_DNA"/>
</dbReference>
<dbReference type="EMBL" id="AY060646">
    <property type="protein sequence ID" value="AAL28194.2"/>
    <property type="molecule type" value="mRNA"/>
</dbReference>
<dbReference type="EMBL" id="AY069170">
    <property type="protein sequence ID" value="AAL39315.1"/>
    <property type="molecule type" value="mRNA"/>
</dbReference>
<dbReference type="RefSeq" id="NP_001014617.1">
    <molecule id="O46036-1"/>
    <property type="nucleotide sequence ID" value="NM_001014617.2"/>
</dbReference>
<dbReference type="RefSeq" id="NP_001262520.1">
    <property type="nucleotide sequence ID" value="NM_001275591.1"/>
</dbReference>
<dbReference type="RefSeq" id="NP_524336.2">
    <molecule id="O46036-2"/>
    <property type="nucleotide sequence ID" value="NM_079612.3"/>
</dbReference>
<dbReference type="RefSeq" id="NP_731762.1">
    <molecule id="O46036-2"/>
    <property type="nucleotide sequence ID" value="NM_169490.2"/>
</dbReference>
<dbReference type="RefSeq" id="NP_731763.1">
    <molecule id="O46036-2"/>
    <property type="nucleotide sequence ID" value="NM_169491.2"/>
</dbReference>
<dbReference type="RefSeq" id="NP_731764.1">
    <molecule id="O46036-2"/>
    <property type="nucleotide sequence ID" value="NM_169492.2"/>
</dbReference>
<dbReference type="SMR" id="O46036"/>
<dbReference type="BioGRID" id="66690">
    <property type="interactions" value="96"/>
</dbReference>
<dbReference type="ComplexPortal" id="CPX-2351">
    <property type="entry name" value="ToRC chromatin remodelling complex"/>
</dbReference>
<dbReference type="DIP" id="DIP-17268N"/>
<dbReference type="FunCoup" id="O46036">
    <property type="interactions" value="1148"/>
</dbReference>
<dbReference type="IntAct" id="O46036">
    <property type="interactions" value="46"/>
</dbReference>
<dbReference type="MINT" id="O46036"/>
<dbReference type="STRING" id="7227.FBpp0306582"/>
<dbReference type="GlyGen" id="O46036">
    <property type="glycosylation" value="2 sites, 1 O-linked glycan (1 site)"/>
</dbReference>
<dbReference type="PaxDb" id="7227-FBpp0099514"/>
<dbReference type="DNASU" id="41602"/>
<dbReference type="EnsemblMetazoa" id="FBtr0082699">
    <molecule id="O46036-2"/>
    <property type="protein sequence ID" value="FBpp0082167"/>
    <property type="gene ID" value="FBgn0020496"/>
</dbReference>
<dbReference type="EnsemblMetazoa" id="FBtr0082700">
    <molecule id="O46036-2"/>
    <property type="protein sequence ID" value="FBpp0082168"/>
    <property type="gene ID" value="FBgn0020496"/>
</dbReference>
<dbReference type="EnsemblMetazoa" id="FBtr0082701">
    <molecule id="O46036-2"/>
    <property type="protein sequence ID" value="FBpp0082169"/>
    <property type="gene ID" value="FBgn0020496"/>
</dbReference>
<dbReference type="EnsemblMetazoa" id="FBtr0082702">
    <molecule id="O46036-2"/>
    <property type="protein sequence ID" value="FBpp0082170"/>
    <property type="gene ID" value="FBgn0020496"/>
</dbReference>
<dbReference type="EnsemblMetazoa" id="FBtr0100161">
    <molecule id="O46036-1"/>
    <property type="protein sequence ID" value="FBpp0099514"/>
    <property type="gene ID" value="FBgn0020496"/>
</dbReference>
<dbReference type="GeneID" id="41602"/>
<dbReference type="KEGG" id="dme:Dmel_CG7583"/>
<dbReference type="AGR" id="FB:FBgn0020496"/>
<dbReference type="CTD" id="41602"/>
<dbReference type="FlyBase" id="FBgn0020496">
    <property type="gene designation" value="CtBP"/>
</dbReference>
<dbReference type="VEuPathDB" id="VectorBase:FBgn0020496"/>
<dbReference type="eggNOG" id="KOG0067">
    <property type="taxonomic scope" value="Eukaryota"/>
</dbReference>
<dbReference type="GeneTree" id="ENSGT00940000171573"/>
<dbReference type="InParanoid" id="O46036"/>
<dbReference type="OrthoDB" id="9991913at2759"/>
<dbReference type="PhylomeDB" id="O46036"/>
<dbReference type="Reactome" id="R-DME-3769402">
    <property type="pathway name" value="Deactivation of the beta-catenin transactivating complex"/>
</dbReference>
<dbReference type="Reactome" id="R-DME-3899300">
    <property type="pathway name" value="SUMOylation of transcription cofactors"/>
</dbReference>
<dbReference type="Reactome" id="R-DME-4641265">
    <property type="pathway name" value="Repression of WNT target genes"/>
</dbReference>
<dbReference type="SignaLink" id="O46036"/>
<dbReference type="BioGRID-ORCS" id="41602">
    <property type="hits" value="1 hit in 3 CRISPR screens"/>
</dbReference>
<dbReference type="ChiTaRS" id="CtBP">
    <property type="organism name" value="fly"/>
</dbReference>
<dbReference type="GenomeRNAi" id="41602"/>
<dbReference type="PRO" id="PR:O46036"/>
<dbReference type="Proteomes" id="UP000000803">
    <property type="component" value="Chromosome 3R"/>
</dbReference>
<dbReference type="Bgee" id="FBgn0020496">
    <property type="expression patterns" value="Expressed in enteroblast (Drosophila) in digestive tract and 296 other cell types or tissues"/>
</dbReference>
<dbReference type="ExpressionAtlas" id="O46036">
    <property type="expression patterns" value="baseline and differential"/>
</dbReference>
<dbReference type="GO" id="GO:0031010">
    <property type="term" value="C:ISWI-type complex"/>
    <property type="evidence" value="ECO:0000314"/>
    <property type="project" value="FlyBase"/>
</dbReference>
<dbReference type="GO" id="GO:0005634">
    <property type="term" value="C:nucleus"/>
    <property type="evidence" value="ECO:0000314"/>
    <property type="project" value="FlyBase"/>
</dbReference>
<dbReference type="GO" id="GO:0140297">
    <property type="term" value="F:DNA-binding transcription factor binding"/>
    <property type="evidence" value="ECO:0000353"/>
    <property type="project" value="FlyBase"/>
</dbReference>
<dbReference type="GO" id="GO:0042802">
    <property type="term" value="F:identical protein binding"/>
    <property type="evidence" value="ECO:0000353"/>
    <property type="project" value="IntAct"/>
</dbReference>
<dbReference type="GO" id="GO:0051287">
    <property type="term" value="F:NAD binding"/>
    <property type="evidence" value="ECO:0007669"/>
    <property type="project" value="InterPro"/>
</dbReference>
<dbReference type="GO" id="GO:0016616">
    <property type="term" value="F:oxidoreductase activity, acting on the CH-OH group of donors, NAD or NADP as acceptor"/>
    <property type="evidence" value="ECO:0007669"/>
    <property type="project" value="InterPro"/>
</dbReference>
<dbReference type="GO" id="GO:0042803">
    <property type="term" value="F:protein homodimerization activity"/>
    <property type="evidence" value="ECO:0000314"/>
    <property type="project" value="FlyBase"/>
</dbReference>
<dbReference type="GO" id="GO:0003713">
    <property type="term" value="F:transcription coactivator activity"/>
    <property type="evidence" value="ECO:0000314"/>
    <property type="project" value="FlyBase"/>
</dbReference>
<dbReference type="GO" id="GO:0001221">
    <property type="term" value="F:transcription coregulator binding"/>
    <property type="evidence" value="ECO:0000318"/>
    <property type="project" value="GO_Central"/>
</dbReference>
<dbReference type="GO" id="GO:0003714">
    <property type="term" value="F:transcription corepressor activity"/>
    <property type="evidence" value="ECO:0000314"/>
    <property type="project" value="FlyBase"/>
</dbReference>
<dbReference type="GO" id="GO:0022416">
    <property type="term" value="P:chaeta development"/>
    <property type="evidence" value="ECO:0000315"/>
    <property type="project" value="FlyBase"/>
</dbReference>
<dbReference type="GO" id="GO:0006338">
    <property type="term" value="P:chromatin remodeling"/>
    <property type="evidence" value="ECO:0000314"/>
    <property type="project" value="FlyBase"/>
</dbReference>
<dbReference type="GO" id="GO:0090090">
    <property type="term" value="P:negative regulation of canonical Wnt signaling pathway"/>
    <property type="evidence" value="ECO:0000315"/>
    <property type="project" value="FlyBase"/>
</dbReference>
<dbReference type="GO" id="GO:0045892">
    <property type="term" value="P:negative regulation of DNA-templated transcription"/>
    <property type="evidence" value="ECO:0000314"/>
    <property type="project" value="FlyBase"/>
</dbReference>
<dbReference type="GO" id="GO:0000122">
    <property type="term" value="P:negative regulation of transcription by RNA polymerase II"/>
    <property type="evidence" value="ECO:0000314"/>
    <property type="project" value="FlyBase"/>
</dbReference>
<dbReference type="GO" id="GO:0090263">
    <property type="term" value="P:positive regulation of canonical Wnt signaling pathway"/>
    <property type="evidence" value="ECO:0000315"/>
    <property type="project" value="FlyBase"/>
</dbReference>
<dbReference type="GO" id="GO:0045944">
    <property type="term" value="P:positive regulation of transcription by RNA polymerase II"/>
    <property type="evidence" value="ECO:0000315"/>
    <property type="project" value="FlyBase"/>
</dbReference>
<dbReference type="GO" id="GO:0006357">
    <property type="term" value="P:regulation of transcription by RNA polymerase II"/>
    <property type="evidence" value="ECO:0000315"/>
    <property type="project" value="FlyBase"/>
</dbReference>
<dbReference type="GO" id="GO:0016360">
    <property type="term" value="P:sensory organ precursor cell fate determination"/>
    <property type="evidence" value="ECO:0000315"/>
    <property type="project" value="FlyBase"/>
</dbReference>
<dbReference type="GO" id="GO:0035220">
    <property type="term" value="P:wing disc development"/>
    <property type="evidence" value="ECO:0000315"/>
    <property type="project" value="FlyBase"/>
</dbReference>
<dbReference type="CDD" id="cd05299">
    <property type="entry name" value="CtBP_dh"/>
    <property type="match status" value="1"/>
</dbReference>
<dbReference type="FunFam" id="3.40.50.720:FF:000012">
    <property type="entry name" value="C-terminal-binding protein 2 isoform 1"/>
    <property type="match status" value="1"/>
</dbReference>
<dbReference type="Gene3D" id="3.40.50.720">
    <property type="entry name" value="NAD(P)-binding Rossmann-like Domain"/>
    <property type="match status" value="2"/>
</dbReference>
<dbReference type="InterPro" id="IPR043322">
    <property type="entry name" value="CtBP"/>
</dbReference>
<dbReference type="InterPro" id="IPR051638">
    <property type="entry name" value="CTBP_dehydrogenase"/>
</dbReference>
<dbReference type="InterPro" id="IPR006139">
    <property type="entry name" value="D-isomer_2_OHA_DH_cat_dom"/>
</dbReference>
<dbReference type="InterPro" id="IPR029753">
    <property type="entry name" value="D-isomer_DH_CS"/>
</dbReference>
<dbReference type="InterPro" id="IPR006140">
    <property type="entry name" value="D-isomer_DH_NAD-bd"/>
</dbReference>
<dbReference type="InterPro" id="IPR036291">
    <property type="entry name" value="NAD(P)-bd_dom_sf"/>
</dbReference>
<dbReference type="PANTHER" id="PTHR46029">
    <property type="entry name" value="C-TERMINAL-BINDING PROTEIN"/>
    <property type="match status" value="1"/>
</dbReference>
<dbReference type="PANTHER" id="PTHR46029:SF7">
    <property type="entry name" value="C-TERMINAL-BINDING PROTEIN"/>
    <property type="match status" value="1"/>
</dbReference>
<dbReference type="Pfam" id="PF00389">
    <property type="entry name" value="2-Hacid_dh"/>
    <property type="match status" value="1"/>
</dbReference>
<dbReference type="Pfam" id="PF02826">
    <property type="entry name" value="2-Hacid_dh_C"/>
    <property type="match status" value="1"/>
</dbReference>
<dbReference type="SUPFAM" id="SSF52283">
    <property type="entry name" value="Formate/glycerate dehydrogenase catalytic domain-like"/>
    <property type="match status" value="1"/>
</dbReference>
<dbReference type="SUPFAM" id="SSF51735">
    <property type="entry name" value="NAD(P)-binding Rossmann-fold domains"/>
    <property type="match status" value="1"/>
</dbReference>
<dbReference type="PROSITE" id="PS00671">
    <property type="entry name" value="D_2_HYDROXYACID_DH_3"/>
    <property type="match status" value="1"/>
</dbReference>
<name>CTBP_DROME</name>
<keyword id="KW-0025">Alternative splicing</keyword>
<keyword id="KW-0539">Nucleus</keyword>
<keyword id="KW-0560">Oxidoreductase</keyword>
<keyword id="KW-1185">Reference proteome</keyword>
<keyword id="KW-0678">Repressor</keyword>
<keyword id="KW-0804">Transcription</keyword>
<keyword id="KW-0805">Transcription regulation</keyword>
<protein>
    <recommendedName>
        <fullName>C-terminal-binding protein</fullName>
        <shortName>CtBP protein</shortName>
    </recommendedName>
    <alternativeName>
        <fullName>dCtBP</fullName>
    </alternativeName>
</protein>
<gene>
    <name type="primary">CtBP</name>
    <name type="ORF">CG7583</name>
</gene>
<proteinExistence type="evidence at protein level"/>
<organism>
    <name type="scientific">Drosophila melanogaster</name>
    <name type="common">Fruit fly</name>
    <dbReference type="NCBI Taxonomy" id="7227"/>
    <lineage>
        <taxon>Eukaryota</taxon>
        <taxon>Metazoa</taxon>
        <taxon>Ecdysozoa</taxon>
        <taxon>Arthropoda</taxon>
        <taxon>Hexapoda</taxon>
        <taxon>Insecta</taxon>
        <taxon>Pterygota</taxon>
        <taxon>Neoptera</taxon>
        <taxon>Endopterygota</taxon>
        <taxon>Diptera</taxon>
        <taxon>Brachycera</taxon>
        <taxon>Muscomorpha</taxon>
        <taxon>Ephydroidea</taxon>
        <taxon>Drosophilidae</taxon>
        <taxon>Drosophila</taxon>
        <taxon>Sophophora</taxon>
    </lineage>
</organism>
<evidence type="ECO:0000250" key="1"/>
<evidence type="ECO:0000256" key="2">
    <source>
        <dbReference type="SAM" id="MobiDB-lite"/>
    </source>
</evidence>
<evidence type="ECO:0000269" key="3">
    <source>
    </source>
</evidence>
<evidence type="ECO:0000269" key="4">
    <source>
    </source>
</evidence>
<evidence type="ECO:0000303" key="5">
    <source>
    </source>
</evidence>
<evidence type="ECO:0000303" key="6">
    <source>
    </source>
</evidence>
<evidence type="ECO:0000303" key="7">
    <source>
    </source>
</evidence>
<evidence type="ECO:0000305" key="8"/>
<accession>O46036</accession>
<accession>O61283</accession>
<accession>Q59DX5</accession>
<accession>Q95SQ8</accession>
<accession>Q9VG02</accession>
<feature type="chain" id="PRO_0000076048" description="C-terminal-binding protein">
    <location>
        <begin position="1"/>
        <end position="476"/>
    </location>
</feature>
<feature type="region of interest" description="Disordered" evidence="2">
    <location>
        <begin position="445"/>
        <end position="476"/>
    </location>
</feature>
<feature type="compositionally biased region" description="Basic and acidic residues" evidence="2">
    <location>
        <begin position="466"/>
        <end position="476"/>
    </location>
</feature>
<feature type="active site" evidence="1">
    <location>
        <position position="266"/>
    </location>
</feature>
<feature type="active site" evidence="1">
    <location>
        <position position="295"/>
    </location>
</feature>
<feature type="active site" description="Proton donor" evidence="1">
    <location>
        <position position="315"/>
    </location>
</feature>
<feature type="binding site" evidence="1">
    <location>
        <position position="100"/>
    </location>
    <ligand>
        <name>NAD(+)</name>
        <dbReference type="ChEBI" id="CHEBI:57540"/>
    </ligand>
</feature>
<feature type="binding site" evidence="1">
    <location>
        <begin position="180"/>
        <end position="185"/>
    </location>
    <ligand>
        <name>NAD(+)</name>
        <dbReference type="ChEBI" id="CHEBI:57540"/>
    </ligand>
</feature>
<feature type="binding site" evidence="1">
    <location>
        <position position="204"/>
    </location>
    <ligand>
        <name>NAD(+)</name>
        <dbReference type="ChEBI" id="CHEBI:57540"/>
    </ligand>
</feature>
<feature type="binding site" evidence="1">
    <location>
        <begin position="237"/>
        <end position="243"/>
    </location>
    <ligand>
        <name>NAD(+)</name>
        <dbReference type="ChEBI" id="CHEBI:57540"/>
    </ligand>
</feature>
<feature type="binding site" evidence="1">
    <location>
        <begin position="264"/>
        <end position="266"/>
    </location>
    <ligand>
        <name>NAD(+)</name>
        <dbReference type="ChEBI" id="CHEBI:57540"/>
    </ligand>
</feature>
<feature type="binding site" evidence="1">
    <location>
        <position position="290"/>
    </location>
    <ligand>
        <name>NAD(+)</name>
        <dbReference type="ChEBI" id="CHEBI:57540"/>
    </ligand>
</feature>
<feature type="binding site" evidence="1">
    <location>
        <begin position="315"/>
        <end position="318"/>
    </location>
    <ligand>
        <name>NAD(+)</name>
        <dbReference type="ChEBI" id="CHEBI:57540"/>
    </ligand>
</feature>
<feature type="splice variant" id="VSP_011813" description="In isoform A." evidence="5 6 7">
    <original>ALHHRAHSTT</original>
    <variation>KLQMISNQEK</variation>
    <location>
        <begin position="377"/>
        <end position="386"/>
    </location>
</feature>
<feature type="splice variant" id="VSP_011814" description="In isoform A." evidence="5 6 7">
    <location>
        <begin position="387"/>
        <end position="476"/>
    </location>
</feature>
<feature type="sequence conflict" description="In Ref. 2; BAA25287." evidence="8" ref="2">
    <location>
        <begin position="299"/>
        <end position="301"/>
    </location>
</feature>
<feature type="sequence conflict" description="In Ref. 1; CAA12074." evidence="8" ref="1">
    <original>A</original>
    <variation>S</variation>
    <location>
        <position position="371"/>
    </location>
</feature>
<comment type="function">
    <text evidence="3 4">Corepressor targeting diverse transcription regulators. Hairy-interacting protein required for embryonic segmentation and hairy-mediated transcriptional repression.</text>
</comment>
<comment type="subunit">
    <text evidence="3">Homodimer. Interacts with hairy (hry), knirps (kni), snail (sna), and Enhancer of split m-delta (HLHm-delta). Complex may be involved in transcriptional repression. Also interacts with adenovirus E1A protein.</text>
</comment>
<comment type="interaction">
    <interactant intactId="EBI-159330">
        <id>O46036</id>
    </interactant>
    <interactant intactId="EBI-159245">
        <id>Q9XTN4</id>
        <label>brk</label>
    </interactant>
    <organismsDiffer>false</organismsDiffer>
    <experiments>3</experiments>
</comment>
<comment type="interaction">
    <interactant intactId="EBI-159330">
        <id>O46036</id>
    </interactant>
    <interactant intactId="EBI-159330">
        <id>O46036</id>
        <label>CtBP</label>
    </interactant>
    <organismsDiffer>false</organismsDiffer>
    <experiments>3</experiments>
</comment>
<comment type="interaction">
    <interactant intactId="EBI-159330">
        <id>O46036</id>
    </interactant>
    <interactant intactId="EBI-123011">
        <id>P14003</id>
        <label>hry</label>
    </interactant>
    <organismsDiffer>false</organismsDiffer>
    <experiments>4</experiments>
</comment>
<comment type="interaction">
    <interactant intactId="EBI-159330">
        <id>O46036</id>
    </interactant>
    <interactant intactId="EBI-170297">
        <id>P10734</id>
        <label>kni</label>
    </interactant>
    <organismsDiffer>false</organismsDiffer>
    <experiments>5</experiments>
</comment>
<comment type="interaction">
    <interactant intactId="EBI-159330">
        <id>O46036</id>
    </interactant>
    <interactant intactId="EBI-152305">
        <id>P08044</id>
        <label>sna</label>
    </interactant>
    <organismsDiffer>false</organismsDiffer>
    <experiments>4</experiments>
</comment>
<comment type="subcellular location">
    <subcellularLocation>
        <location>Nucleus</location>
    </subcellularLocation>
</comment>
<comment type="alternative products">
    <event type="alternative splicing"/>
    <isoform>
        <id>O46036-1</id>
        <name>E</name>
        <sequence type="displayed"/>
    </isoform>
    <isoform>
        <id>O46036-2</id>
        <name>A</name>
        <name>B</name>
        <sequence type="described" ref="VSP_011813 VSP_011814"/>
    </isoform>
    <text>A number of isoforms are produced.</text>
</comment>
<comment type="developmental stage">
    <text evidence="3">Expressed both maternally and zygotically. Zygotic expression is highest in pupae.</text>
</comment>
<comment type="similarity">
    <text evidence="8">Belongs to the D-isomer specific 2-hydroxyacid dehydrogenase family.</text>
</comment>
<sequence>MDKNLMMPKRSRIDVKGNFANGPLQARPLVALLDGRDCSIEMPILKDVATVAFCDAQSTSEIHEKVLNEAVGALMWHTIILTKEDLEKFKALRIIVRIGSGTDNIDVKAAGELGIAVCNVPGYGVEEVADTTMCLILNLYRRTYWLANMVREGKKFTGPEQVREAAHGCARIRGDTLGLVGLGRIGSAVALRAKAFGFNVIFYDPYLPDGIDKSLGLTRVYTLQDLLFQSDCVSLHCTLNEHNHHLINEFTIKQMRPGAFLVNTARGGLVDDETLALALKQGRIRAAALDVHENEPYNVFQGALKDAPNLICTPHAAFFSDASATELREMAATEIRRAIVGNIPDVLRNCVNKEYFMRTPPAAAAGGVAAAVYPEGALHHRAHSTTPHDGPHSTTNLGSTVGGGPTTVAQAAAAAVAAAAAAALLPSPVPSHLSPQVGGLPLGIVSSQSPLSAPDPNNHLSSSIKTEVKAESTEAP</sequence>